<reference key="1">
    <citation type="journal article" date="2002" name="Proc. Natl. Acad. Sci. U.S.A.">
        <title>The Brucella suis genome reveals fundamental similarities between animal and plant pathogens and symbionts.</title>
        <authorList>
            <person name="Paulsen I.T."/>
            <person name="Seshadri R."/>
            <person name="Nelson K.E."/>
            <person name="Eisen J.A."/>
            <person name="Heidelberg J.F."/>
            <person name="Read T.D."/>
            <person name="Dodson R.J."/>
            <person name="Umayam L.A."/>
            <person name="Brinkac L.M."/>
            <person name="Beanan M.J."/>
            <person name="Daugherty S.C."/>
            <person name="DeBoy R.T."/>
            <person name="Durkin A.S."/>
            <person name="Kolonay J.F."/>
            <person name="Madupu R."/>
            <person name="Nelson W.C."/>
            <person name="Ayodeji B."/>
            <person name="Kraul M."/>
            <person name="Shetty J."/>
            <person name="Malek J.A."/>
            <person name="Van Aken S.E."/>
            <person name="Riedmuller S."/>
            <person name="Tettelin H."/>
            <person name="Gill S.R."/>
            <person name="White O."/>
            <person name="Salzberg S.L."/>
            <person name="Hoover D.L."/>
            <person name="Lindler L.E."/>
            <person name="Halling S.M."/>
            <person name="Boyle S.M."/>
            <person name="Fraser C.M."/>
        </authorList>
    </citation>
    <scope>NUCLEOTIDE SEQUENCE [LARGE SCALE GENOMIC DNA]</scope>
    <source>
        <strain>1330</strain>
    </source>
</reference>
<reference key="2">
    <citation type="journal article" date="2011" name="J. Bacteriol.">
        <title>Revised genome sequence of Brucella suis 1330.</title>
        <authorList>
            <person name="Tae H."/>
            <person name="Shallom S."/>
            <person name="Settlage R."/>
            <person name="Preston D."/>
            <person name="Adams L.G."/>
            <person name="Garner H.R."/>
        </authorList>
    </citation>
    <scope>NUCLEOTIDE SEQUENCE [LARGE SCALE GENOMIC DNA]</scope>
    <source>
        <strain>1330</strain>
    </source>
</reference>
<dbReference type="EMBL" id="AE014291">
    <property type="protein sequence ID" value="AAN30415.1"/>
    <property type="molecule type" value="Genomic_DNA"/>
</dbReference>
<dbReference type="EMBL" id="CP002997">
    <property type="protein sequence ID" value="AEM18831.1"/>
    <property type="molecule type" value="Genomic_DNA"/>
</dbReference>
<dbReference type="RefSeq" id="WP_002964610.1">
    <property type="nucleotide sequence ID" value="NZ_KN046804.1"/>
</dbReference>
<dbReference type="SMR" id="P64272"/>
<dbReference type="GeneID" id="93016210"/>
<dbReference type="KEGG" id="bms:BR1504"/>
<dbReference type="KEGG" id="bsi:BS1330_I1498"/>
<dbReference type="PATRIC" id="fig|204722.21.peg.2884"/>
<dbReference type="HOGENOM" id="CLU_101379_2_0_5"/>
<dbReference type="Proteomes" id="UP000007104">
    <property type="component" value="Chromosome I"/>
</dbReference>
<dbReference type="GO" id="GO:0003677">
    <property type="term" value="F:DNA binding"/>
    <property type="evidence" value="ECO:0007669"/>
    <property type="project" value="UniProtKB-UniRule"/>
</dbReference>
<dbReference type="GO" id="GO:0070063">
    <property type="term" value="F:RNA polymerase binding"/>
    <property type="evidence" value="ECO:0007669"/>
    <property type="project" value="InterPro"/>
</dbReference>
<dbReference type="GO" id="GO:0006354">
    <property type="term" value="P:DNA-templated transcription elongation"/>
    <property type="evidence" value="ECO:0007669"/>
    <property type="project" value="TreeGrafter"/>
</dbReference>
<dbReference type="GO" id="GO:0032784">
    <property type="term" value="P:regulation of DNA-templated transcription elongation"/>
    <property type="evidence" value="ECO:0007669"/>
    <property type="project" value="UniProtKB-UniRule"/>
</dbReference>
<dbReference type="FunFam" id="1.10.287.180:FF:000001">
    <property type="entry name" value="Transcription elongation factor GreA"/>
    <property type="match status" value="1"/>
</dbReference>
<dbReference type="FunFam" id="3.10.50.30:FF:000001">
    <property type="entry name" value="Transcription elongation factor GreA"/>
    <property type="match status" value="1"/>
</dbReference>
<dbReference type="Gene3D" id="3.10.50.30">
    <property type="entry name" value="Transcription elongation factor, GreA/GreB, C-terminal domain"/>
    <property type="match status" value="1"/>
</dbReference>
<dbReference type="Gene3D" id="1.10.287.180">
    <property type="entry name" value="Transcription elongation factor, GreA/GreB, N-terminal domain"/>
    <property type="match status" value="1"/>
</dbReference>
<dbReference type="HAMAP" id="MF_00105">
    <property type="entry name" value="GreA_GreB"/>
    <property type="match status" value="1"/>
</dbReference>
<dbReference type="InterPro" id="IPR036953">
    <property type="entry name" value="GreA/GreB_C_sf"/>
</dbReference>
<dbReference type="InterPro" id="IPR018151">
    <property type="entry name" value="TF_GreA/GreB_CS"/>
</dbReference>
<dbReference type="InterPro" id="IPR006359">
    <property type="entry name" value="Tscrpt_elong_fac_GreA"/>
</dbReference>
<dbReference type="InterPro" id="IPR028624">
    <property type="entry name" value="Tscrpt_elong_fac_GreA/B"/>
</dbReference>
<dbReference type="InterPro" id="IPR001437">
    <property type="entry name" value="Tscrpt_elong_fac_GreA/B_C"/>
</dbReference>
<dbReference type="InterPro" id="IPR023459">
    <property type="entry name" value="Tscrpt_elong_fac_GreA/B_fam"/>
</dbReference>
<dbReference type="InterPro" id="IPR022691">
    <property type="entry name" value="Tscrpt_elong_fac_GreA/B_N"/>
</dbReference>
<dbReference type="InterPro" id="IPR036805">
    <property type="entry name" value="Tscrpt_elong_fac_GreA/B_N_sf"/>
</dbReference>
<dbReference type="NCBIfam" id="TIGR01462">
    <property type="entry name" value="greA"/>
    <property type="match status" value="1"/>
</dbReference>
<dbReference type="NCBIfam" id="NF001261">
    <property type="entry name" value="PRK00226.1-2"/>
    <property type="match status" value="1"/>
</dbReference>
<dbReference type="NCBIfam" id="NF001263">
    <property type="entry name" value="PRK00226.1-4"/>
    <property type="match status" value="1"/>
</dbReference>
<dbReference type="NCBIfam" id="NF001264">
    <property type="entry name" value="PRK00226.1-5"/>
    <property type="match status" value="1"/>
</dbReference>
<dbReference type="PANTHER" id="PTHR30437">
    <property type="entry name" value="TRANSCRIPTION ELONGATION FACTOR GREA"/>
    <property type="match status" value="1"/>
</dbReference>
<dbReference type="PANTHER" id="PTHR30437:SF4">
    <property type="entry name" value="TRANSCRIPTION ELONGATION FACTOR GREA"/>
    <property type="match status" value="1"/>
</dbReference>
<dbReference type="Pfam" id="PF01272">
    <property type="entry name" value="GreA_GreB"/>
    <property type="match status" value="1"/>
</dbReference>
<dbReference type="Pfam" id="PF03449">
    <property type="entry name" value="GreA_GreB_N"/>
    <property type="match status" value="1"/>
</dbReference>
<dbReference type="PIRSF" id="PIRSF006092">
    <property type="entry name" value="GreA_GreB"/>
    <property type="match status" value="1"/>
</dbReference>
<dbReference type="SUPFAM" id="SSF54534">
    <property type="entry name" value="FKBP-like"/>
    <property type="match status" value="1"/>
</dbReference>
<dbReference type="SUPFAM" id="SSF46557">
    <property type="entry name" value="GreA transcript cleavage protein, N-terminal domain"/>
    <property type="match status" value="1"/>
</dbReference>
<dbReference type="PROSITE" id="PS00829">
    <property type="entry name" value="GREAB_1"/>
    <property type="match status" value="1"/>
</dbReference>
<dbReference type="PROSITE" id="PS00830">
    <property type="entry name" value="GREAB_2"/>
    <property type="match status" value="1"/>
</dbReference>
<gene>
    <name evidence="1" type="primary">greA</name>
    <name type="ordered locus">BR1504</name>
    <name type="ordered locus">BS1330_I1498</name>
</gene>
<protein>
    <recommendedName>
        <fullName evidence="1">Transcription elongation factor GreA</fullName>
    </recommendedName>
    <alternativeName>
        <fullName evidence="1">Transcript cleavage factor GreA</fullName>
    </alternativeName>
</protein>
<comment type="function">
    <text evidence="1">Necessary for efficient RNA polymerase transcription elongation past template-encoded arresting sites. The arresting sites in DNA have the property of trapping a certain fraction of elongating RNA polymerases that pass through, resulting in locked ternary complexes. Cleavage of the nascent transcript by cleavage factors such as GreA or GreB allows the resumption of elongation from the new 3'terminus. GreA releases sequences of 2 to 3 nucleotides.</text>
</comment>
<comment type="similarity">
    <text evidence="1">Belongs to the GreA/GreB family.</text>
</comment>
<sequence length="157" mass="17529">MEKFPMTPRGFEKLKEELRWRQQSERPRIIEAIAEARAHGDLSENAEYHAAKEAQSLNEGRINELEDLVARAEVIDVSKLTGDRIKFGATVTMIDEDTEEEKIYQIVGDQEADVKEGRISISSPIARALIGKGEGDTIEVNAPGGSRSYEIIALKFV</sequence>
<proteinExistence type="inferred from homology"/>
<accession>P64272</accession>
<accession>G0KBY9</accession>
<accession>Q8YID6</accession>
<organism>
    <name type="scientific">Brucella suis biovar 1 (strain 1330)</name>
    <dbReference type="NCBI Taxonomy" id="204722"/>
    <lineage>
        <taxon>Bacteria</taxon>
        <taxon>Pseudomonadati</taxon>
        <taxon>Pseudomonadota</taxon>
        <taxon>Alphaproteobacteria</taxon>
        <taxon>Hyphomicrobiales</taxon>
        <taxon>Brucellaceae</taxon>
        <taxon>Brucella/Ochrobactrum group</taxon>
        <taxon>Brucella</taxon>
    </lineage>
</organism>
<evidence type="ECO:0000255" key="1">
    <source>
        <dbReference type="HAMAP-Rule" id="MF_00105"/>
    </source>
</evidence>
<name>GREA_BRUSU</name>
<feature type="chain" id="PRO_0000176911" description="Transcription elongation factor GreA">
    <location>
        <begin position="1"/>
        <end position="157"/>
    </location>
</feature>
<keyword id="KW-0238">DNA-binding</keyword>
<keyword id="KW-0804">Transcription</keyword>
<keyword id="KW-0805">Transcription regulation</keyword>